<comment type="similarity">
    <text evidence="1">Belongs to the bacterial ribosomal protein bL35 family.</text>
</comment>
<protein>
    <recommendedName>
        <fullName evidence="1">Large ribosomal subunit protein bL35</fullName>
    </recommendedName>
    <alternativeName>
        <fullName evidence="2">50S ribosomal protein L35</fullName>
    </alternativeName>
</protein>
<accession>B7K6S5</accession>
<gene>
    <name evidence="1" type="primary">rpmI</name>
    <name evidence="1" type="synonym">rpl35</name>
    <name type="ordered locus">PCC7424_4254</name>
</gene>
<keyword id="KW-1185">Reference proteome</keyword>
<keyword id="KW-0687">Ribonucleoprotein</keyword>
<keyword id="KW-0689">Ribosomal protein</keyword>
<evidence type="ECO:0000255" key="1">
    <source>
        <dbReference type="HAMAP-Rule" id="MF_00514"/>
    </source>
</evidence>
<evidence type="ECO:0000305" key="2"/>
<sequence length="67" mass="7898">MPKLKTRKAAAKRFRATGSGNKIFRRKAYKNHLLYHKSAERKRRRLSGLALVSEEDIKEVRLMLPYL</sequence>
<dbReference type="EMBL" id="CP001291">
    <property type="protein sequence ID" value="ACK72624.1"/>
    <property type="molecule type" value="Genomic_DNA"/>
</dbReference>
<dbReference type="RefSeq" id="WP_015956209.1">
    <property type="nucleotide sequence ID" value="NC_011729.1"/>
</dbReference>
<dbReference type="SMR" id="B7K6S5"/>
<dbReference type="STRING" id="65393.PCC7424_4254"/>
<dbReference type="KEGG" id="cyc:PCC7424_4254"/>
<dbReference type="eggNOG" id="COG0291">
    <property type="taxonomic scope" value="Bacteria"/>
</dbReference>
<dbReference type="HOGENOM" id="CLU_169643_4_0_3"/>
<dbReference type="OrthoDB" id="47476at2"/>
<dbReference type="Proteomes" id="UP000002384">
    <property type="component" value="Chromosome"/>
</dbReference>
<dbReference type="GO" id="GO:0022625">
    <property type="term" value="C:cytosolic large ribosomal subunit"/>
    <property type="evidence" value="ECO:0007669"/>
    <property type="project" value="TreeGrafter"/>
</dbReference>
<dbReference type="GO" id="GO:0003735">
    <property type="term" value="F:structural constituent of ribosome"/>
    <property type="evidence" value="ECO:0007669"/>
    <property type="project" value="InterPro"/>
</dbReference>
<dbReference type="GO" id="GO:0006412">
    <property type="term" value="P:translation"/>
    <property type="evidence" value="ECO:0007669"/>
    <property type="project" value="UniProtKB-UniRule"/>
</dbReference>
<dbReference type="FunFam" id="4.10.410.60:FF:000001">
    <property type="entry name" value="50S ribosomal protein L35"/>
    <property type="match status" value="1"/>
</dbReference>
<dbReference type="Gene3D" id="4.10.410.60">
    <property type="match status" value="1"/>
</dbReference>
<dbReference type="HAMAP" id="MF_00514">
    <property type="entry name" value="Ribosomal_bL35"/>
    <property type="match status" value="1"/>
</dbReference>
<dbReference type="InterPro" id="IPR001706">
    <property type="entry name" value="Ribosomal_bL35"/>
</dbReference>
<dbReference type="InterPro" id="IPR021137">
    <property type="entry name" value="Ribosomal_bL35-like"/>
</dbReference>
<dbReference type="InterPro" id="IPR018265">
    <property type="entry name" value="Ribosomal_bL35_CS"/>
</dbReference>
<dbReference type="InterPro" id="IPR037229">
    <property type="entry name" value="Ribosomal_bL35_sf"/>
</dbReference>
<dbReference type="NCBIfam" id="TIGR00001">
    <property type="entry name" value="rpmI_bact"/>
    <property type="match status" value="1"/>
</dbReference>
<dbReference type="PANTHER" id="PTHR33343">
    <property type="entry name" value="54S RIBOSOMAL PROTEIN BL35M"/>
    <property type="match status" value="1"/>
</dbReference>
<dbReference type="PANTHER" id="PTHR33343:SF1">
    <property type="entry name" value="LARGE RIBOSOMAL SUBUNIT PROTEIN BL35M"/>
    <property type="match status" value="1"/>
</dbReference>
<dbReference type="Pfam" id="PF01632">
    <property type="entry name" value="Ribosomal_L35p"/>
    <property type="match status" value="1"/>
</dbReference>
<dbReference type="PRINTS" id="PR00064">
    <property type="entry name" value="RIBOSOMALL35"/>
</dbReference>
<dbReference type="SUPFAM" id="SSF143034">
    <property type="entry name" value="L35p-like"/>
    <property type="match status" value="1"/>
</dbReference>
<dbReference type="PROSITE" id="PS00936">
    <property type="entry name" value="RIBOSOMAL_L35"/>
    <property type="match status" value="1"/>
</dbReference>
<organism>
    <name type="scientific">Gloeothece citriformis (strain PCC 7424)</name>
    <name type="common">Cyanothece sp. (strain PCC 7424)</name>
    <dbReference type="NCBI Taxonomy" id="65393"/>
    <lineage>
        <taxon>Bacteria</taxon>
        <taxon>Bacillati</taxon>
        <taxon>Cyanobacteriota</taxon>
        <taxon>Cyanophyceae</taxon>
        <taxon>Oscillatoriophycideae</taxon>
        <taxon>Chroococcales</taxon>
        <taxon>Aphanothecaceae</taxon>
        <taxon>Gloeothece</taxon>
        <taxon>Gloeothece citriformis</taxon>
    </lineage>
</organism>
<reference key="1">
    <citation type="journal article" date="2011" name="MBio">
        <title>Novel metabolic attributes of the genus Cyanothece, comprising a group of unicellular nitrogen-fixing Cyanobacteria.</title>
        <authorList>
            <person name="Bandyopadhyay A."/>
            <person name="Elvitigala T."/>
            <person name="Welsh E."/>
            <person name="Stockel J."/>
            <person name="Liberton M."/>
            <person name="Min H."/>
            <person name="Sherman L.A."/>
            <person name="Pakrasi H.B."/>
        </authorList>
    </citation>
    <scope>NUCLEOTIDE SEQUENCE [LARGE SCALE GENOMIC DNA]</scope>
    <source>
        <strain>PCC 7424</strain>
    </source>
</reference>
<name>RL35_GLOC7</name>
<feature type="chain" id="PRO_1000127334" description="Large ribosomal subunit protein bL35">
    <location>
        <begin position="1"/>
        <end position="67"/>
    </location>
</feature>
<proteinExistence type="inferred from homology"/>